<organism evidence="9">
    <name type="scientific">Caenorhabditis elegans</name>
    <dbReference type="NCBI Taxonomy" id="6239"/>
    <lineage>
        <taxon>Eukaryota</taxon>
        <taxon>Metazoa</taxon>
        <taxon>Ecdysozoa</taxon>
        <taxon>Nematoda</taxon>
        <taxon>Chromadorea</taxon>
        <taxon>Rhabditida</taxon>
        <taxon>Rhabditina</taxon>
        <taxon>Rhabditomorpha</taxon>
        <taxon>Rhabditoidea</taxon>
        <taxon>Rhabditidae</taxon>
        <taxon>Peloderinae</taxon>
        <taxon>Caenorhabditis</taxon>
    </lineage>
</organism>
<gene>
    <name evidence="10" type="primary">taf-10</name>
    <name evidence="6" type="synonym">taf-11</name>
    <name evidence="10" type="ORF">K03B4.3</name>
</gene>
<proteinExistence type="evidence at protein level"/>
<keyword id="KW-0539">Nucleus</keyword>
<keyword id="KW-1185">Reference proteome</keyword>
<keyword id="KW-0804">Transcription</keyword>
<keyword id="KW-0805">Transcription regulation</keyword>
<protein>
    <recommendedName>
        <fullName evidence="2">Transcription initiation factor TFIID subunit 10</fullName>
    </recommendedName>
    <alternativeName>
        <fullName evidence="10">TBP-associated transcription factor family member taf-10</fullName>
    </alternativeName>
</protein>
<dbReference type="EMBL" id="BX284605">
    <property type="protein sequence ID" value="CCD71026.1"/>
    <property type="molecule type" value="Genomic_DNA"/>
</dbReference>
<dbReference type="RefSeq" id="NP_504260.1">
    <property type="nucleotide sequence ID" value="NM_071859.5"/>
</dbReference>
<dbReference type="SMR" id="Q95ZS0"/>
<dbReference type="FunCoup" id="Q95ZS0">
    <property type="interactions" value="1218"/>
</dbReference>
<dbReference type="STRING" id="6239.K03B4.3b.3"/>
<dbReference type="PaxDb" id="6239-K03B4.3b.1"/>
<dbReference type="EnsemblMetazoa" id="K03B4.3b.1">
    <property type="protein sequence ID" value="K03B4.3b.1"/>
    <property type="gene ID" value="WBGene00006392"/>
</dbReference>
<dbReference type="GeneID" id="3564983"/>
<dbReference type="KEGG" id="cel:CELE_K03B4.3"/>
<dbReference type="UCSC" id="K03B4.3a">
    <property type="organism name" value="c. elegans"/>
</dbReference>
<dbReference type="AGR" id="WB:WBGene00006392"/>
<dbReference type="CTD" id="3564983"/>
<dbReference type="WormBase" id="K03B4.3b">
    <property type="protein sequence ID" value="CE28580"/>
    <property type="gene ID" value="WBGene00006392"/>
    <property type="gene designation" value="taf-10"/>
</dbReference>
<dbReference type="eggNOG" id="KOG3423">
    <property type="taxonomic scope" value="Eukaryota"/>
</dbReference>
<dbReference type="GeneTree" id="ENSGT00390000009368"/>
<dbReference type="HOGENOM" id="CLU_1549067_0_0_1"/>
<dbReference type="InParanoid" id="Q95ZS0"/>
<dbReference type="OMA" id="DDTHEFI"/>
<dbReference type="OrthoDB" id="154356at2759"/>
<dbReference type="PhylomeDB" id="Q95ZS0"/>
<dbReference type="Reactome" id="R-CEL-674695">
    <property type="pathway name" value="RNA Polymerase II Pre-transcription Events"/>
</dbReference>
<dbReference type="Reactome" id="R-CEL-73776">
    <property type="pathway name" value="RNA Polymerase II Promoter Escape"/>
</dbReference>
<dbReference type="Reactome" id="R-CEL-73779">
    <property type="pathway name" value="RNA Polymerase II Transcription Pre-Initiation And Promoter Opening"/>
</dbReference>
<dbReference type="Reactome" id="R-CEL-75953">
    <property type="pathway name" value="RNA Polymerase II Transcription Initiation"/>
</dbReference>
<dbReference type="Reactome" id="R-CEL-76042">
    <property type="pathway name" value="RNA Polymerase II Transcription Initiation And Promoter Clearance"/>
</dbReference>
<dbReference type="PRO" id="PR:Q95ZS0"/>
<dbReference type="Proteomes" id="UP000001940">
    <property type="component" value="Chromosome V"/>
</dbReference>
<dbReference type="Bgee" id="WBGene00006392">
    <property type="expression patterns" value="Expressed in germ line (C elegans) and 4 other cell types or tissues"/>
</dbReference>
<dbReference type="ExpressionAtlas" id="Q95ZS0">
    <property type="expression patterns" value="baseline and differential"/>
</dbReference>
<dbReference type="GO" id="GO:0005634">
    <property type="term" value="C:nucleus"/>
    <property type="evidence" value="ECO:0000314"/>
    <property type="project" value="WormBase"/>
</dbReference>
<dbReference type="GO" id="GO:0000124">
    <property type="term" value="C:SAGA complex"/>
    <property type="evidence" value="ECO:0000318"/>
    <property type="project" value="GO_Central"/>
</dbReference>
<dbReference type="GO" id="GO:0005669">
    <property type="term" value="C:transcription factor TFIID complex"/>
    <property type="evidence" value="ECO:0000318"/>
    <property type="project" value="GO_Central"/>
</dbReference>
<dbReference type="GO" id="GO:1990841">
    <property type="term" value="F:promoter-specific chromatin binding"/>
    <property type="evidence" value="ECO:0000318"/>
    <property type="project" value="GO_Central"/>
</dbReference>
<dbReference type="GO" id="GO:0009792">
    <property type="term" value="P:embryo development ending in birth or egg hatching"/>
    <property type="evidence" value="ECO:0000315"/>
    <property type="project" value="WormBase"/>
</dbReference>
<dbReference type="GO" id="GO:0045944">
    <property type="term" value="P:positive regulation of transcription by RNA polymerase II"/>
    <property type="evidence" value="ECO:0000315"/>
    <property type="project" value="WormBase"/>
</dbReference>
<dbReference type="GO" id="GO:0009794">
    <property type="term" value="P:regulation of mitotic cell cycle, embryonic"/>
    <property type="evidence" value="ECO:0000315"/>
    <property type="project" value="WormBase"/>
</dbReference>
<dbReference type="GO" id="GO:0006367">
    <property type="term" value="P:transcription initiation at RNA polymerase II promoter"/>
    <property type="evidence" value="ECO:0000318"/>
    <property type="project" value="GO_Central"/>
</dbReference>
<dbReference type="CDD" id="cd07982">
    <property type="entry name" value="HFD_TAF10"/>
    <property type="match status" value="1"/>
</dbReference>
<dbReference type="InterPro" id="IPR003923">
    <property type="entry name" value="TAF10"/>
</dbReference>
<dbReference type="PANTHER" id="PTHR21242">
    <property type="entry name" value="TRANSCRIPTION INITIATION FACTOR TFIID SUBUNIT 10"/>
    <property type="match status" value="1"/>
</dbReference>
<dbReference type="PANTHER" id="PTHR21242:SF0">
    <property type="entry name" value="TRANSCRIPTION INITIATION FACTOR TFIID SUBUNIT 10"/>
    <property type="match status" value="1"/>
</dbReference>
<dbReference type="Pfam" id="PF03540">
    <property type="entry name" value="TAF10"/>
    <property type="match status" value="1"/>
</dbReference>
<dbReference type="PIRSF" id="PIRSF017246">
    <property type="entry name" value="TFIID_TAF10"/>
    <property type="match status" value="1"/>
</dbReference>
<dbReference type="PRINTS" id="PR01443">
    <property type="entry name" value="TFIID30KDSUB"/>
</dbReference>
<feature type="chain" id="PRO_0000455416" description="Transcription initiation factor TFIID subunit 10">
    <location>
        <begin position="1"/>
        <end position="179"/>
    </location>
</feature>
<feature type="region of interest" description="Disordered" evidence="3">
    <location>
        <begin position="1"/>
        <end position="23"/>
    </location>
</feature>
<accession>Q95ZS0</accession>
<comment type="function">
    <text evidence="1 4">The TFIID basal transcription factor complex plays a major role in the initiation of RNA polymerase II (Pol II)-dependent transcription (By similarity). TFIID recognizes and binds promoters via its subunit tbp-1, a TATA-box-binding protein, and promotes assembly of the pre-initiation complex (PIC) (By similarity). The TFIID complex consists of tbp-1 and TBP-associated factors (TAFs), including taf-10 (By similarity). Essential for early embryonic development, but not required for transcription of some genes; probably acts via activating transcription initiation by RNA Pol II, as part of the TFIID complex (PubMed:11566890).</text>
</comment>
<comment type="subunit">
    <text evidence="1">Component of the TFIID basal transcription factor complex, composed of TATA-box-binding protein tbp-1, and a number of TBP-associated factors (TAFs).</text>
</comment>
<comment type="subcellular location">
    <subcellularLocation>
        <location evidence="2 4">Nucleus</location>
    </subcellularLocation>
</comment>
<comment type="developmental stage">
    <text evidence="4 5">Expressed from the 4-cell stage through late gastrulation (at protein level) (PubMed:11566890). May be maternally expressed (PubMed:11566890).</text>
</comment>
<comment type="disruption phenotype">
    <text evidence="4">RNAi-mediated knockdown causes arrested development at 90-100 cells and inhibits differentiation (PubMed:11566890). The two E cell daughters (E2 cells), which form the endoderm, divide abnormally early, immediately after the MS2 cells (PubMed:11566890). Phosphorylation of the RNA Pol II large subunit C-terminal domain (CTD) is reduced slightly in embryos (PubMed:11566890). Abolishes expression of taf-9, perhaps as a result of altered protein stability (PubMed:11566890). Reduces expression of a range of genes, including let-858, rps-5, hsp16.2, and pes-10, but has little or no effect on expression of cki-2 and sur-5 (PubMed:11566890).</text>
</comment>
<comment type="similarity">
    <text evidence="7">Belongs to the TAF10 family.</text>
</comment>
<comment type="caution">
    <text evidence="6 8">Throughout PMID:11566890, the gene name taf-11 is used instead of taf-10, based on an earlier nomenclature; readers should be aware to avoid confusion.</text>
</comment>
<reference evidence="9" key="1">
    <citation type="journal article" date="1998" name="Science">
        <title>Genome sequence of the nematode C. elegans: a platform for investigating biology.</title>
        <authorList>
            <consortium name="The C. elegans sequencing consortium"/>
        </authorList>
    </citation>
    <scope>NUCLEOTIDE SEQUENCE [LARGE SCALE GENOMIC DNA]</scope>
    <source>
        <strain evidence="9">Bristol N2</strain>
    </source>
</reference>
<reference evidence="7" key="2">
    <citation type="journal article" date="2001" name="EMBO J.">
        <title>Distinct requirements for C.elegans TAF(II)s in early embryonic transcription.</title>
        <authorList>
            <person name="Walker A.K."/>
            <person name="Rothman J.H."/>
            <person name="Shi Y."/>
            <person name="Blackwell T.K."/>
        </authorList>
    </citation>
    <scope>FUNCTION</scope>
    <scope>SUBCELLULAR LOCATION</scope>
    <scope>DEVELOPMENTAL STAGE</scope>
    <scope>DISRUPTION PHENOTYPE</scope>
</reference>
<reference evidence="7" key="3">
    <citation type="journal article" date="2002" name="Genes Dev.">
        <title>A unified nomenclature for TATA box binding protein (TBP)-associated factors (TAFs) involved in RNA polymerase II transcription.</title>
        <authorList>
            <person name="Tora L."/>
        </authorList>
    </citation>
    <scope>NOMENCLATURE</scope>
</reference>
<evidence type="ECO:0000250" key="1">
    <source>
        <dbReference type="UniProtKB" id="Q12962"/>
    </source>
</evidence>
<evidence type="ECO:0000255" key="2">
    <source>
        <dbReference type="PIRNR" id="PIRNR017246"/>
    </source>
</evidence>
<evidence type="ECO:0000256" key="3">
    <source>
        <dbReference type="SAM" id="MobiDB-lite"/>
    </source>
</evidence>
<evidence type="ECO:0000269" key="4">
    <source>
    </source>
</evidence>
<evidence type="ECO:0000303" key="5">
    <source>
    </source>
</evidence>
<evidence type="ECO:0000303" key="6">
    <source>
    </source>
</evidence>
<evidence type="ECO:0000305" key="7"/>
<evidence type="ECO:0000305" key="8">
    <source>
    </source>
</evidence>
<evidence type="ECO:0000312" key="9">
    <source>
        <dbReference type="Proteomes" id="UP000001940"/>
    </source>
</evidence>
<evidence type="ECO:0000312" key="10">
    <source>
        <dbReference type="WormBase" id="K03B4.3b"/>
    </source>
</evidence>
<sequence length="179" mass="20032">MNDPEQYEPSSSTESVLMPPPALPQYFQRPAAAPQVYSTLEPSVQNLRSSLHKPLTGNQQQFVQKTLENVQKNPSQDDTHEFINQLADYPPTIPDSVTLHFLKSAGVDGSDPRVTRMISLAAQKHVSDIILDAMTSARMKGLGQTKKGTKDTKYTLTEELLDEILKEYGHQNTRPPYHT</sequence>
<name>TAF10_CAEEL</name>